<accession>B0S2E5</accession>
<sequence>MVQKNTFEAMKIGLASPDKIRQWSWGEVKKPETINYRTLKPEKEGLFCEKIFGPTKDYECNCGKYKRIRYKGIVCEKCGVEVTKSKVRRERMGHIELATPVSHIWYFKGIPSRMGLLLDMSPRALEKVLYFASFVVIDPGKTDLYEKQLLTEQEYEEYCDKYEEDVDFRAKMGAEAIKELLQKIDLQEEYKNLTETFEGSTGQKKVRILRRLEVVEAFIESKNDPSWMIMDVIPVIPPDIRPMVQLEGGRFATSDLNDLYRRVINRNNRLKRLLDIGSPEIIVRNEKRMLQEAVDALIDNGRRGKPVTGPGNRPLKSLSDMLKGKSGRFRQNLLGKRVDYSGRSVIVIGPNLKFYQCGLPKKMALELFKPFVIRELVKREISHNVKNAKKLVERENDKVWDVLEDIIVDHPVLLNRAPTLHRLGIQAFEPILVEGKAIKLHPLVCTAYNADFDGDQMAVHLPLSPEAQAEARLLMLSTNNILAPKDGKPITTPSQDMVLGSFYMTTRKEGQKGEGLIFKDIDEMMLAYAMHYVTLQTIVKVRRNSVNNDGTSKIVESTVGRFIFNEGIPQDLGMVNRNEDPYSLEVDLQVDKKMLSKIIDLTFRRYGNIRTAELLDYIKSMGYKYSTIGALTISMGDITIPDSKKGIIEQAEQRIDMVQDIYLQGDITNEERYKKVIEIWEQCIKDVTRALMTNLPADNNLNIMAVSGARGSENQIRQLGGMRGLMSDTAGNTIEIPITSNFREGLSVQEFFISTHGSRKGLSDTALRTADSGYLTRRLVDVSQDVIITEDDCGTDEYIVAKEIKDGNRQVEDLKSRIIGRYAFEDILDLDTGEIIVHKNDMINEAIAERIESKGIKEVKVRSVLGCKMKHGVCAKCYGRNLATGKPVNIGEAVGIIAAQSIGEPGTQLTMRTFHSGGIAGVGITSGLPRVEELFEARKPKGLAYITEIEGTVKIQENKKRNDVIVTSEDGEEQVYQIPYGAHIRVNEGDHVEKGEPLTEGSINPQDILRVNGAEGVRDYIIREVQKVYRLQGVDIDDKHIEIIIRQMMSKIKVEESGDSGFLSGSVVDARDFKMTNEQLIKEGKTPATGTHSLMGITKASLATESFLSAASFQETTRVLTETSIKGKVDHLIGLKENVIIGKLIPAGTGIAKYDRIEVDYDGKAEDDMIEAEKAQASNDSEEAEESTIISGNYESLQDEDK</sequence>
<proteinExistence type="inferred from homology"/>
<comment type="function">
    <text evidence="1">DNA-dependent RNA polymerase catalyzes the transcription of DNA into RNA using the four ribonucleoside triphosphates as substrates.</text>
</comment>
<comment type="catalytic activity">
    <reaction evidence="1">
        <text>RNA(n) + a ribonucleoside 5'-triphosphate = RNA(n+1) + diphosphate</text>
        <dbReference type="Rhea" id="RHEA:21248"/>
        <dbReference type="Rhea" id="RHEA-COMP:14527"/>
        <dbReference type="Rhea" id="RHEA-COMP:17342"/>
        <dbReference type="ChEBI" id="CHEBI:33019"/>
        <dbReference type="ChEBI" id="CHEBI:61557"/>
        <dbReference type="ChEBI" id="CHEBI:140395"/>
        <dbReference type="EC" id="2.7.7.6"/>
    </reaction>
</comment>
<comment type="cofactor">
    <cofactor evidence="1">
        <name>Mg(2+)</name>
        <dbReference type="ChEBI" id="CHEBI:18420"/>
    </cofactor>
    <text evidence="1">Binds 1 Mg(2+) ion per subunit.</text>
</comment>
<comment type="cofactor">
    <cofactor evidence="1">
        <name>Zn(2+)</name>
        <dbReference type="ChEBI" id="CHEBI:29105"/>
    </cofactor>
    <text evidence="1">Binds 2 Zn(2+) ions per subunit.</text>
</comment>
<comment type="subunit">
    <text evidence="1">The RNAP catalytic core consists of 2 alpha, 1 beta, 1 beta' and 1 omega subunit. When a sigma factor is associated with the core the holoenzyme is formed, which can initiate transcription.</text>
</comment>
<comment type="similarity">
    <text evidence="1">Belongs to the RNA polymerase beta' chain family.</text>
</comment>
<comment type="sequence caution" evidence="3">
    <conflict type="erroneous initiation">
        <sequence resource="EMBL-CDS" id="BAG08535"/>
    </conflict>
    <text>Extended N-terminus.</text>
</comment>
<name>RPOC_FINM2</name>
<keyword id="KW-0240">DNA-directed RNA polymerase</keyword>
<keyword id="KW-0460">Magnesium</keyword>
<keyword id="KW-0479">Metal-binding</keyword>
<keyword id="KW-0548">Nucleotidyltransferase</keyword>
<keyword id="KW-1185">Reference proteome</keyword>
<keyword id="KW-0804">Transcription</keyword>
<keyword id="KW-0808">Transferase</keyword>
<keyword id="KW-0862">Zinc</keyword>
<organism>
    <name type="scientific">Finegoldia magna (strain ATCC 29328 / DSM 20472 / WAL 2508)</name>
    <name type="common">Peptostreptococcus magnus</name>
    <dbReference type="NCBI Taxonomy" id="334413"/>
    <lineage>
        <taxon>Bacteria</taxon>
        <taxon>Bacillati</taxon>
        <taxon>Bacillota</taxon>
        <taxon>Tissierellia</taxon>
        <taxon>Tissierellales</taxon>
        <taxon>Peptoniphilaceae</taxon>
        <taxon>Finegoldia</taxon>
    </lineage>
</organism>
<protein>
    <recommendedName>
        <fullName evidence="1">DNA-directed RNA polymerase subunit beta'</fullName>
        <shortName evidence="1">RNAP subunit beta'</shortName>
        <ecNumber evidence="1">2.7.7.6</ecNumber>
    </recommendedName>
    <alternativeName>
        <fullName evidence="1">RNA polymerase subunit beta'</fullName>
    </alternativeName>
    <alternativeName>
        <fullName evidence="1">Transcriptase subunit beta'</fullName>
    </alternativeName>
</protein>
<reference key="1">
    <citation type="journal article" date="2008" name="DNA Res.">
        <title>Complete genome sequence of Finegoldia magna, an anaerobic opportunistic pathogen.</title>
        <authorList>
            <person name="Goto T."/>
            <person name="Yamashita A."/>
            <person name="Hirakawa H."/>
            <person name="Matsutani M."/>
            <person name="Todo K."/>
            <person name="Ohshima K."/>
            <person name="Toh H."/>
            <person name="Miyamoto K."/>
            <person name="Kuhara S."/>
            <person name="Hattori M."/>
            <person name="Shimizu T."/>
            <person name="Akimoto S."/>
        </authorList>
    </citation>
    <scope>NUCLEOTIDE SEQUENCE [LARGE SCALE GENOMIC DNA]</scope>
    <source>
        <strain>ATCC 29328 / DSM 20472 / WAL 2508</strain>
    </source>
</reference>
<feature type="chain" id="PRO_0000353365" description="DNA-directed RNA polymerase subunit beta'">
    <location>
        <begin position="1"/>
        <end position="1202"/>
    </location>
</feature>
<feature type="region of interest" description="Disordered" evidence="2">
    <location>
        <begin position="301"/>
        <end position="320"/>
    </location>
</feature>
<feature type="region of interest" description="Disordered" evidence="2">
    <location>
        <begin position="1168"/>
        <end position="1202"/>
    </location>
</feature>
<feature type="binding site" evidence="1">
    <location>
        <position position="60"/>
    </location>
    <ligand>
        <name>Zn(2+)</name>
        <dbReference type="ChEBI" id="CHEBI:29105"/>
        <label>1</label>
    </ligand>
</feature>
<feature type="binding site" evidence="1">
    <location>
        <position position="62"/>
    </location>
    <ligand>
        <name>Zn(2+)</name>
        <dbReference type="ChEBI" id="CHEBI:29105"/>
        <label>1</label>
    </ligand>
</feature>
<feature type="binding site" evidence="1">
    <location>
        <position position="75"/>
    </location>
    <ligand>
        <name>Zn(2+)</name>
        <dbReference type="ChEBI" id="CHEBI:29105"/>
        <label>1</label>
    </ligand>
</feature>
<feature type="binding site" evidence="1">
    <location>
        <position position="78"/>
    </location>
    <ligand>
        <name>Zn(2+)</name>
        <dbReference type="ChEBI" id="CHEBI:29105"/>
        <label>1</label>
    </ligand>
</feature>
<feature type="binding site" evidence="1">
    <location>
        <position position="451"/>
    </location>
    <ligand>
        <name>Mg(2+)</name>
        <dbReference type="ChEBI" id="CHEBI:18420"/>
    </ligand>
</feature>
<feature type="binding site" evidence="1">
    <location>
        <position position="453"/>
    </location>
    <ligand>
        <name>Mg(2+)</name>
        <dbReference type="ChEBI" id="CHEBI:18420"/>
    </ligand>
</feature>
<feature type="binding site" evidence="1">
    <location>
        <position position="455"/>
    </location>
    <ligand>
        <name>Mg(2+)</name>
        <dbReference type="ChEBI" id="CHEBI:18420"/>
    </ligand>
</feature>
<feature type="binding site" evidence="1">
    <location>
        <position position="793"/>
    </location>
    <ligand>
        <name>Zn(2+)</name>
        <dbReference type="ChEBI" id="CHEBI:29105"/>
        <label>2</label>
    </ligand>
</feature>
<feature type="binding site" evidence="1">
    <location>
        <position position="867"/>
    </location>
    <ligand>
        <name>Zn(2+)</name>
        <dbReference type="ChEBI" id="CHEBI:29105"/>
        <label>2</label>
    </ligand>
</feature>
<feature type="binding site" evidence="1">
    <location>
        <position position="874"/>
    </location>
    <ligand>
        <name>Zn(2+)</name>
        <dbReference type="ChEBI" id="CHEBI:29105"/>
        <label>2</label>
    </ligand>
</feature>
<feature type="binding site" evidence="1">
    <location>
        <position position="877"/>
    </location>
    <ligand>
        <name>Zn(2+)</name>
        <dbReference type="ChEBI" id="CHEBI:29105"/>
        <label>2</label>
    </ligand>
</feature>
<gene>
    <name evidence="1" type="primary">rpoC</name>
    <name type="ordered locus">FMG_1117</name>
</gene>
<dbReference type="EC" id="2.7.7.6" evidence="1"/>
<dbReference type="EMBL" id="AP008971">
    <property type="protein sequence ID" value="BAG08535.1"/>
    <property type="status" value="ALT_INIT"/>
    <property type="molecule type" value="Genomic_DNA"/>
</dbReference>
<dbReference type="RefSeq" id="WP_041250604.1">
    <property type="nucleotide sequence ID" value="NC_010376.1"/>
</dbReference>
<dbReference type="SMR" id="B0S2E5"/>
<dbReference type="STRING" id="334413.FMG_1117"/>
<dbReference type="KEGG" id="fma:FMG_1117"/>
<dbReference type="eggNOG" id="COG0086">
    <property type="taxonomic scope" value="Bacteria"/>
</dbReference>
<dbReference type="HOGENOM" id="CLU_000524_3_0_9"/>
<dbReference type="Proteomes" id="UP000001319">
    <property type="component" value="Chromosome"/>
</dbReference>
<dbReference type="GO" id="GO:0000428">
    <property type="term" value="C:DNA-directed RNA polymerase complex"/>
    <property type="evidence" value="ECO:0007669"/>
    <property type="project" value="UniProtKB-KW"/>
</dbReference>
<dbReference type="GO" id="GO:0003677">
    <property type="term" value="F:DNA binding"/>
    <property type="evidence" value="ECO:0007669"/>
    <property type="project" value="UniProtKB-UniRule"/>
</dbReference>
<dbReference type="GO" id="GO:0003899">
    <property type="term" value="F:DNA-directed RNA polymerase activity"/>
    <property type="evidence" value="ECO:0007669"/>
    <property type="project" value="UniProtKB-UniRule"/>
</dbReference>
<dbReference type="GO" id="GO:0000287">
    <property type="term" value="F:magnesium ion binding"/>
    <property type="evidence" value="ECO:0007669"/>
    <property type="project" value="UniProtKB-UniRule"/>
</dbReference>
<dbReference type="GO" id="GO:0008270">
    <property type="term" value="F:zinc ion binding"/>
    <property type="evidence" value="ECO:0007669"/>
    <property type="project" value="UniProtKB-UniRule"/>
</dbReference>
<dbReference type="GO" id="GO:0006351">
    <property type="term" value="P:DNA-templated transcription"/>
    <property type="evidence" value="ECO:0007669"/>
    <property type="project" value="UniProtKB-UniRule"/>
</dbReference>
<dbReference type="CDD" id="cd02655">
    <property type="entry name" value="RNAP_beta'_C"/>
    <property type="match status" value="1"/>
</dbReference>
<dbReference type="CDD" id="cd01609">
    <property type="entry name" value="RNAP_beta'_N"/>
    <property type="match status" value="1"/>
</dbReference>
<dbReference type="FunFam" id="4.10.860.120:FF:000001">
    <property type="entry name" value="DNA-directed RNA polymerase subunit beta"/>
    <property type="match status" value="1"/>
</dbReference>
<dbReference type="Gene3D" id="1.10.132.30">
    <property type="match status" value="1"/>
</dbReference>
<dbReference type="Gene3D" id="1.10.150.390">
    <property type="match status" value="1"/>
</dbReference>
<dbReference type="Gene3D" id="1.10.1790.20">
    <property type="match status" value="1"/>
</dbReference>
<dbReference type="Gene3D" id="1.10.40.90">
    <property type="match status" value="1"/>
</dbReference>
<dbReference type="Gene3D" id="2.40.40.20">
    <property type="match status" value="1"/>
</dbReference>
<dbReference type="Gene3D" id="2.40.50.100">
    <property type="match status" value="1"/>
</dbReference>
<dbReference type="Gene3D" id="4.10.860.120">
    <property type="entry name" value="RNA polymerase II, clamp domain"/>
    <property type="match status" value="1"/>
</dbReference>
<dbReference type="Gene3D" id="1.10.274.100">
    <property type="entry name" value="RNA polymerase Rpb1, domain 3"/>
    <property type="match status" value="1"/>
</dbReference>
<dbReference type="HAMAP" id="MF_01322">
    <property type="entry name" value="RNApol_bact_RpoC"/>
    <property type="match status" value="1"/>
</dbReference>
<dbReference type="InterPro" id="IPR045867">
    <property type="entry name" value="DNA-dir_RpoC_beta_prime"/>
</dbReference>
<dbReference type="InterPro" id="IPR012754">
    <property type="entry name" value="DNA-dir_RpoC_beta_prime_bact"/>
</dbReference>
<dbReference type="InterPro" id="IPR000722">
    <property type="entry name" value="RNA_pol_asu"/>
</dbReference>
<dbReference type="InterPro" id="IPR006592">
    <property type="entry name" value="RNA_pol_N"/>
</dbReference>
<dbReference type="InterPro" id="IPR007080">
    <property type="entry name" value="RNA_pol_Rpb1_1"/>
</dbReference>
<dbReference type="InterPro" id="IPR007066">
    <property type="entry name" value="RNA_pol_Rpb1_3"/>
</dbReference>
<dbReference type="InterPro" id="IPR042102">
    <property type="entry name" value="RNA_pol_Rpb1_3_sf"/>
</dbReference>
<dbReference type="InterPro" id="IPR007083">
    <property type="entry name" value="RNA_pol_Rpb1_4"/>
</dbReference>
<dbReference type="InterPro" id="IPR007081">
    <property type="entry name" value="RNA_pol_Rpb1_5"/>
</dbReference>
<dbReference type="InterPro" id="IPR044893">
    <property type="entry name" value="RNA_pol_Rpb1_clamp_domain"/>
</dbReference>
<dbReference type="InterPro" id="IPR038120">
    <property type="entry name" value="Rpb1_funnel_sf"/>
</dbReference>
<dbReference type="NCBIfam" id="TIGR02386">
    <property type="entry name" value="rpoC_TIGR"/>
    <property type="match status" value="1"/>
</dbReference>
<dbReference type="PANTHER" id="PTHR19376">
    <property type="entry name" value="DNA-DIRECTED RNA POLYMERASE"/>
    <property type="match status" value="1"/>
</dbReference>
<dbReference type="PANTHER" id="PTHR19376:SF54">
    <property type="entry name" value="DNA-DIRECTED RNA POLYMERASE SUBUNIT BETA"/>
    <property type="match status" value="1"/>
</dbReference>
<dbReference type="Pfam" id="PF04997">
    <property type="entry name" value="RNA_pol_Rpb1_1"/>
    <property type="match status" value="1"/>
</dbReference>
<dbReference type="Pfam" id="PF00623">
    <property type="entry name" value="RNA_pol_Rpb1_2"/>
    <property type="match status" value="1"/>
</dbReference>
<dbReference type="Pfam" id="PF04983">
    <property type="entry name" value="RNA_pol_Rpb1_3"/>
    <property type="match status" value="1"/>
</dbReference>
<dbReference type="Pfam" id="PF05000">
    <property type="entry name" value="RNA_pol_Rpb1_4"/>
    <property type="match status" value="1"/>
</dbReference>
<dbReference type="Pfam" id="PF04998">
    <property type="entry name" value="RNA_pol_Rpb1_5"/>
    <property type="match status" value="1"/>
</dbReference>
<dbReference type="SMART" id="SM00663">
    <property type="entry name" value="RPOLA_N"/>
    <property type="match status" value="1"/>
</dbReference>
<dbReference type="SUPFAM" id="SSF64484">
    <property type="entry name" value="beta and beta-prime subunits of DNA dependent RNA-polymerase"/>
    <property type="match status" value="1"/>
</dbReference>
<evidence type="ECO:0000255" key="1">
    <source>
        <dbReference type="HAMAP-Rule" id="MF_01322"/>
    </source>
</evidence>
<evidence type="ECO:0000256" key="2">
    <source>
        <dbReference type="SAM" id="MobiDB-lite"/>
    </source>
</evidence>
<evidence type="ECO:0000305" key="3"/>